<name>SMRC2_HUMAN</name>
<organism>
    <name type="scientific">Homo sapiens</name>
    <name type="common">Human</name>
    <dbReference type="NCBI Taxonomy" id="9606"/>
    <lineage>
        <taxon>Eukaryota</taxon>
        <taxon>Metazoa</taxon>
        <taxon>Chordata</taxon>
        <taxon>Craniata</taxon>
        <taxon>Vertebrata</taxon>
        <taxon>Euteleostomi</taxon>
        <taxon>Mammalia</taxon>
        <taxon>Eutheria</taxon>
        <taxon>Euarchontoglires</taxon>
        <taxon>Primates</taxon>
        <taxon>Haplorrhini</taxon>
        <taxon>Catarrhini</taxon>
        <taxon>Hominidae</taxon>
        <taxon>Homo</taxon>
    </lineage>
</organism>
<proteinExistence type="evidence at protein level"/>
<evidence type="ECO:0000250" key="1">
    <source>
        <dbReference type="UniProtKB" id="Q6PDG5"/>
    </source>
</evidence>
<evidence type="ECO:0000255" key="2"/>
<evidence type="ECO:0000255" key="3">
    <source>
        <dbReference type="PROSITE-ProRule" id="PRU00247"/>
    </source>
</evidence>
<evidence type="ECO:0000255" key="4">
    <source>
        <dbReference type="PROSITE-ProRule" id="PRU00624"/>
    </source>
</evidence>
<evidence type="ECO:0000255" key="5">
    <source>
        <dbReference type="PROSITE-ProRule" id="PRU01376"/>
    </source>
</evidence>
<evidence type="ECO:0000256" key="6">
    <source>
        <dbReference type="SAM" id="MobiDB-lite"/>
    </source>
</evidence>
<evidence type="ECO:0000269" key="7">
    <source>
    </source>
</evidence>
<evidence type="ECO:0000269" key="8">
    <source>
    </source>
</evidence>
<evidence type="ECO:0000269" key="9">
    <source>
    </source>
</evidence>
<evidence type="ECO:0000269" key="10">
    <source>
    </source>
</evidence>
<evidence type="ECO:0000269" key="11">
    <source>
    </source>
</evidence>
<evidence type="ECO:0000269" key="12">
    <source>
    </source>
</evidence>
<evidence type="ECO:0000269" key="13">
    <source>
    </source>
</evidence>
<evidence type="ECO:0000269" key="14">
    <source>
    </source>
</evidence>
<evidence type="ECO:0000269" key="15">
    <source>
    </source>
</evidence>
<evidence type="ECO:0000303" key="16">
    <source>
    </source>
</evidence>
<evidence type="ECO:0000303" key="17">
    <source>
    </source>
</evidence>
<evidence type="ECO:0000303" key="18">
    <source>
    </source>
</evidence>
<evidence type="ECO:0000303" key="19">
    <source ref="2"/>
</evidence>
<evidence type="ECO:0000303" key="20">
    <source ref="3"/>
</evidence>
<evidence type="ECO:0000305" key="21"/>
<evidence type="ECO:0007744" key="22">
    <source>
    </source>
</evidence>
<evidence type="ECO:0007744" key="23">
    <source>
    </source>
</evidence>
<evidence type="ECO:0007744" key="24">
    <source>
    </source>
</evidence>
<evidence type="ECO:0007744" key="25">
    <source>
    </source>
</evidence>
<evidence type="ECO:0007744" key="26">
    <source>
    </source>
</evidence>
<evidence type="ECO:0007744" key="27">
    <source>
    </source>
</evidence>
<evidence type="ECO:0007744" key="28">
    <source>
    </source>
</evidence>
<evidence type="ECO:0007744" key="29">
    <source>
    </source>
</evidence>
<evidence type="ECO:0007744" key="30">
    <source>
    </source>
</evidence>
<evidence type="ECO:0007744" key="31">
    <source>
    </source>
</evidence>
<evidence type="ECO:0007744" key="32">
    <source>
    </source>
</evidence>
<evidence type="ECO:0007829" key="33">
    <source>
        <dbReference type="PDB" id="6KAG"/>
    </source>
</evidence>
<evidence type="ECO:0007829" key="34">
    <source>
        <dbReference type="PDB" id="6LTH"/>
    </source>
</evidence>
<evidence type="ECO:0007829" key="35">
    <source>
        <dbReference type="PDB" id="7VDV"/>
    </source>
</evidence>
<accession>Q8TAQ2</accession>
<accession>F8VTJ5</accession>
<accession>Q59GV3</accession>
<accession>Q92923</accession>
<accession>Q96E12</accession>
<accession>Q96GY4</accession>
<gene>
    <name type="primary">SMARCC2</name>
    <name type="synonym">BAF170</name>
</gene>
<feature type="chain" id="PRO_0000197117" description="SWI/SNF complex subunit SMARCC2">
    <location>
        <begin position="1"/>
        <end position="1214"/>
    </location>
</feature>
<feature type="domain" description="MarR-like" evidence="5">
    <location>
        <begin position="10"/>
        <end position="136"/>
    </location>
</feature>
<feature type="domain" description="BRCT; N-terminus" evidence="5">
    <location>
        <begin position="140"/>
        <end position="183"/>
    </location>
</feature>
<feature type="domain" description="Chromo" evidence="5">
    <location>
        <begin position="189"/>
        <end position="217"/>
    </location>
</feature>
<feature type="domain" description="BRCT; C-terminus" evidence="5">
    <location>
        <begin position="233"/>
        <end position="257"/>
    </location>
</feature>
<feature type="domain" description="SWIRM" evidence="3">
    <location>
        <begin position="424"/>
        <end position="521"/>
    </location>
</feature>
<feature type="domain" description="SANT" evidence="4">
    <location>
        <begin position="596"/>
        <end position="647"/>
    </location>
</feature>
<feature type="region of interest" description="MarR-like, BRCT and chromo domains module" evidence="5">
    <location>
        <begin position="1"/>
        <end position="274"/>
    </location>
</feature>
<feature type="region of interest" description="Disordered" evidence="6">
    <location>
        <begin position="257"/>
        <end position="413"/>
    </location>
</feature>
<feature type="region of interest" description="Disordered" evidence="6">
    <location>
        <begin position="724"/>
        <end position="852"/>
    </location>
</feature>
<feature type="region of interest" description="Disordered" evidence="6">
    <location>
        <begin position="947"/>
        <end position="983"/>
    </location>
</feature>
<feature type="region of interest" description="Disordered" evidence="6">
    <location>
        <begin position="997"/>
        <end position="1092"/>
    </location>
</feature>
<feature type="region of interest" description="Disordered" evidence="6">
    <location>
        <begin position="1182"/>
        <end position="1214"/>
    </location>
</feature>
<feature type="coiled-coil region" evidence="2">
    <location>
        <begin position="907"/>
        <end position="934"/>
    </location>
</feature>
<feature type="compositionally biased region" description="Polar residues" evidence="6">
    <location>
        <begin position="275"/>
        <end position="284"/>
    </location>
</feature>
<feature type="compositionally biased region" description="Basic and acidic residues" evidence="6">
    <location>
        <begin position="331"/>
        <end position="344"/>
    </location>
</feature>
<feature type="compositionally biased region" description="Acidic residues" evidence="6">
    <location>
        <begin position="379"/>
        <end position="398"/>
    </location>
</feature>
<feature type="compositionally biased region" description="Basic and acidic residues" evidence="6">
    <location>
        <begin position="747"/>
        <end position="777"/>
    </location>
</feature>
<feature type="compositionally biased region" description="Basic and acidic residues" evidence="6">
    <location>
        <begin position="784"/>
        <end position="852"/>
    </location>
</feature>
<feature type="compositionally biased region" description="Low complexity" evidence="6">
    <location>
        <begin position="949"/>
        <end position="959"/>
    </location>
</feature>
<feature type="compositionally biased region" description="Pro residues" evidence="6">
    <location>
        <begin position="960"/>
        <end position="974"/>
    </location>
</feature>
<feature type="compositionally biased region" description="Low complexity" evidence="6">
    <location>
        <begin position="997"/>
        <end position="1033"/>
    </location>
</feature>
<feature type="compositionally biased region" description="Pro residues" evidence="6">
    <location>
        <begin position="1034"/>
        <end position="1051"/>
    </location>
</feature>
<feature type="compositionally biased region" description="Pro residues" evidence="6">
    <location>
        <begin position="1186"/>
        <end position="1202"/>
    </location>
</feature>
<feature type="modified residue" description="Phosphoserine" evidence="23 27 28 29">
    <location>
        <position position="283"/>
    </location>
</feature>
<feature type="modified residue" description="Phosphoserine" evidence="23">
    <location>
        <position position="286"/>
    </location>
</feature>
<feature type="modified residue" description="Phosphoserine" evidence="23 26 27 28">
    <location>
        <position position="302"/>
    </location>
</feature>
<feature type="modified residue" description="Phosphoserine" evidence="23 26 27">
    <location>
        <position position="304"/>
    </location>
</feature>
<feature type="modified residue" description="Phosphoserine" evidence="26">
    <location>
        <position position="306"/>
    </location>
</feature>
<feature type="modified residue" description="N6-(ADP-ribosyl)lysine" evidence="1">
    <location>
        <position position="312"/>
    </location>
</feature>
<feature type="modified residue" description="N6-acetyllysine" evidence="24">
    <location>
        <position position="326"/>
    </location>
</feature>
<feature type="modified residue" description="Phosphoserine" evidence="22 23 25 26 27 28 29">
    <location>
        <position position="347"/>
    </location>
</feature>
<feature type="modified residue" description="Phosphoserine" evidence="1">
    <location>
        <position position="387"/>
    </location>
</feature>
<feature type="modified residue" description="Phosphothreonine" evidence="26 28">
    <location>
        <position position="548"/>
    </location>
</feature>
<feature type="modified residue" description="Phosphoserine" evidence="26 28">
    <location>
        <position position="813"/>
    </location>
</feature>
<feature type="cross-link" description="Glycyl lysine isopeptide (Lys-Gly) (interchain with G-Cter in SUMO2)" evidence="32">
    <location>
        <position position="564"/>
    </location>
</feature>
<feature type="cross-link" description="Glycyl lysine isopeptide (Lys-Gly) (interchain with G-Cter in SUMO2)" evidence="30 32">
    <location>
        <position position="566"/>
    </location>
</feature>
<feature type="cross-link" description="Glycyl lysine isopeptide (Lys-Gly) (interchain with G-Cter in SUMO2)" evidence="32">
    <location>
        <position position="568"/>
    </location>
</feature>
<feature type="cross-link" description="Glycyl lysine isopeptide (Lys-Gly) (interchain with G-Cter in SUMO2)" evidence="32">
    <location>
        <position position="592"/>
    </location>
</feature>
<feature type="cross-link" description="Glycyl lysine isopeptide (Lys-Gly) (interchain with G-Cter in SUMO2)" evidence="30 32">
    <location>
        <position position="704"/>
    </location>
</feature>
<feature type="cross-link" description="Glycyl lysine isopeptide (Lys-Gly) (interchain with G-Cter in SUMO2)" evidence="32">
    <location>
        <position position="787"/>
    </location>
</feature>
<feature type="cross-link" description="Glycyl lysine isopeptide (Lys-Gly) (interchain with G-Cter in SUMO2)" evidence="31 32">
    <location>
        <position position="848"/>
    </location>
</feature>
<feature type="splice variant" id="VSP_012490" description="In isoform 2 and isoform 3." evidence="16 19 20">
    <original>Q</original>
    <variation>QGRQVDADTKAGRKGKELDDLVPETAKGKPEL</variation>
    <location>
        <position position="550"/>
    </location>
</feature>
<feature type="splice variant" id="VSP_012491" description="In isoform 2." evidence="16 19">
    <location>
        <begin position="1075"/>
        <end position="1189"/>
    </location>
</feature>
<feature type="splice variant" id="VSP_044647" description="In isoform 3." evidence="20">
    <location>
        <begin position="1075"/>
        <end position="1167"/>
    </location>
</feature>
<feature type="sequence variant" id="VAR_082077" description="In CSS8." evidence="15">
    <original>N</original>
    <variation>D</variation>
    <location>
        <position position="134"/>
    </location>
</feature>
<feature type="sequence variant" id="VAR_082078" description="In CSS8." evidence="15">
    <location>
        <begin position="241"/>
        <end position="1214"/>
    </location>
</feature>
<feature type="sequence variant" id="VAR_082079" description="In CSS8; dbSNP:rs2135687866." evidence="15">
    <original>L</original>
    <variation>P</variation>
    <location>
        <position position="609"/>
    </location>
</feature>
<feature type="sequence variant" id="VAR_082080" description="In CSS8; dbSNP:rs1565903367." evidence="15">
    <original>L</original>
    <variation>P</variation>
    <location>
        <position position="610"/>
    </location>
</feature>
<feature type="sequence variant" id="VAR_082081" description="In CSS8." evidence="15">
    <original>L</original>
    <variation>P</variation>
    <location>
        <position position="613"/>
    </location>
</feature>
<feature type="sequence variant" id="VAR_082082" description="In CSS8; uncertain significance." evidence="15">
    <original>C</original>
    <variation>R</variation>
    <location>
        <position position="635"/>
    </location>
</feature>
<feature type="sequence variant" id="VAR_082083" description="In CSS8; uncertain significance; dbSNP:rs1565896447." evidence="15">
    <original>M</original>
    <variation>V</variation>
    <location>
        <position position="896"/>
    </location>
</feature>
<feature type="sequence variant" id="VAR_082084" description="In CSS8; uncertain significance." evidence="15">
    <original>E</original>
    <variation>G</variation>
    <location>
        <position position="900"/>
    </location>
</feature>
<feature type="sequence conflict" description="In Ref. 1; AAC50694." evidence="21" ref="1">
    <original>AKKKNA</original>
    <variation>VKEEKC</variation>
    <location>
        <begin position="311"/>
        <end position="316"/>
    </location>
</feature>
<feature type="sequence conflict" description="In Ref. 1; AAC50694." evidence="21" ref="1">
    <original>M</original>
    <variation>S</variation>
    <location>
        <position position="498"/>
    </location>
</feature>
<feature type="sequence conflict" description="In Ref. 1; AAC50694." evidence="21" ref="1">
    <original>V</original>
    <variation>A</variation>
    <location>
        <position position="587"/>
    </location>
</feature>
<feature type="sequence conflict" description="In Ref. 2; AAP88926 and 5; AAH13045." evidence="21" ref="2 5">
    <original>L</original>
    <variation>F</variation>
    <location>
        <position position="876"/>
    </location>
</feature>
<feature type="sequence conflict" description="In Ref. 1; AAC50694." evidence="21" ref="1">
    <original>A</original>
    <variation>P</variation>
    <location>
        <position position="942"/>
    </location>
</feature>
<feature type="sequence conflict" description="In Ref. 1; AAC50694." evidence="21" ref="1">
    <original>A</original>
    <variation>R</variation>
    <location>
        <position position="1020"/>
    </location>
</feature>
<feature type="sequence conflict" description="In Ref. 1; AAC50694." evidence="21" ref="1">
    <original>HGHHHHLPFA</original>
    <variation>MGSPPSPVR</variation>
    <location>
        <begin position="1117"/>
        <end position="1126"/>
    </location>
</feature>
<feature type="strand" evidence="34">
    <location>
        <begin position="424"/>
        <end position="426"/>
    </location>
</feature>
<feature type="helix" evidence="33">
    <location>
        <begin position="428"/>
        <end position="430"/>
    </location>
</feature>
<feature type="strand" evidence="34">
    <location>
        <begin position="437"/>
        <end position="439"/>
    </location>
</feature>
<feature type="helix" evidence="33">
    <location>
        <begin position="440"/>
        <end position="445"/>
    </location>
</feature>
<feature type="helix" evidence="33">
    <location>
        <begin position="447"/>
        <end position="449"/>
    </location>
</feature>
<feature type="strand" evidence="35">
    <location>
        <begin position="455"/>
        <end position="457"/>
    </location>
</feature>
<feature type="helix" evidence="33">
    <location>
        <begin position="459"/>
        <end position="475"/>
    </location>
</feature>
<feature type="helix" evidence="33">
    <location>
        <begin position="483"/>
        <end position="487"/>
    </location>
</feature>
<feature type="helix" evidence="33">
    <location>
        <begin position="494"/>
        <end position="506"/>
    </location>
</feature>
<feature type="strand" evidence="33">
    <location>
        <begin position="509"/>
        <end position="511"/>
    </location>
</feature>
<feature type="strand" evidence="34">
    <location>
        <begin position="516"/>
        <end position="519"/>
    </location>
</feature>
<feature type="strand" evidence="34">
    <location>
        <begin position="533"/>
        <end position="536"/>
    </location>
</feature>
<feature type="turn" evidence="34">
    <location>
        <begin position="541"/>
        <end position="544"/>
    </location>
</feature>
<feature type="helix" evidence="34">
    <location>
        <begin position="603"/>
        <end position="615"/>
    </location>
</feature>
<feature type="helix" evidence="34">
    <location>
        <begin position="621"/>
        <end position="627"/>
    </location>
</feature>
<feature type="helix" evidence="34">
    <location>
        <begin position="632"/>
        <end position="640"/>
    </location>
</feature>
<feature type="helix" evidence="34">
    <location>
        <begin position="646"/>
        <end position="649"/>
    </location>
</feature>
<feature type="helix" evidence="34">
    <location>
        <begin position="658"/>
        <end position="660"/>
    </location>
</feature>
<feature type="strand" evidence="34">
    <location>
        <begin position="661"/>
        <end position="663"/>
    </location>
</feature>
<feature type="turn" evidence="34">
    <location>
        <begin position="668"/>
        <end position="670"/>
    </location>
</feature>
<feature type="helix" evidence="34">
    <location>
        <begin position="672"/>
        <end position="681"/>
    </location>
</feature>
<feature type="helix" evidence="34">
    <location>
        <begin position="686"/>
        <end position="701"/>
    </location>
</feature>
<feature type="strand" evidence="34">
    <location>
        <begin position="709"/>
        <end position="711"/>
    </location>
</feature>
<feature type="helix" evidence="34">
    <location>
        <begin position="712"/>
        <end position="715"/>
    </location>
</feature>
<feature type="helix" evidence="34">
    <location>
        <begin position="859"/>
        <end position="948"/>
    </location>
</feature>
<keyword id="KW-0002">3D-structure</keyword>
<keyword id="KW-0007">Acetylation</keyword>
<keyword id="KW-0013">ADP-ribosylation</keyword>
<keyword id="KW-0025">Alternative splicing</keyword>
<keyword id="KW-0156">Chromatin regulator</keyword>
<keyword id="KW-0175">Coiled coil</keyword>
<keyword id="KW-0225">Disease variant</keyword>
<keyword id="KW-0991">Intellectual disability</keyword>
<keyword id="KW-1017">Isopeptide bond</keyword>
<keyword id="KW-0524">Neurogenesis</keyword>
<keyword id="KW-0539">Nucleus</keyword>
<keyword id="KW-0597">Phosphoprotein</keyword>
<keyword id="KW-1267">Proteomics identification</keyword>
<keyword id="KW-1185">Reference proteome</keyword>
<keyword id="KW-0804">Transcription</keyword>
<keyword id="KW-0805">Transcription regulation</keyword>
<keyword id="KW-0832">Ubl conjugation</keyword>
<protein>
    <recommendedName>
        <fullName>SWI/SNF complex subunit SMARCC2</fullName>
    </recommendedName>
    <alternativeName>
        <fullName>BRG1-associated factor 170</fullName>
        <shortName>BAF170</shortName>
    </alternativeName>
    <alternativeName>
        <fullName>SWI/SNF complex 170 kDa subunit</fullName>
    </alternativeName>
    <alternativeName>
        <fullName>SWI/SNF-related matrix-associated actin-dependent regulator of chromatin subfamily C member 2</fullName>
    </alternativeName>
</protein>
<reference key="1">
    <citation type="journal article" date="1996" name="Genes Dev.">
        <title>Diversity and specialization of mammalian SWI/SNF complexes.</title>
        <authorList>
            <person name="Wang W."/>
            <person name="Xue Y."/>
            <person name="Zhou S."/>
            <person name="Kuo A."/>
            <person name="Cairns B.R."/>
            <person name="Crabtree G.R."/>
        </authorList>
    </citation>
    <scope>NUCLEOTIDE SEQUENCE [MRNA] (ISOFORM 1)</scope>
    <source>
        <tissue>T-cell</tissue>
    </source>
</reference>
<reference key="2">
    <citation type="submission" date="2003-08" db="EMBL/GenBank/DDBJ databases">
        <title>Cloning of human full-length CDSs in BD Creator(TM) system donor vector.</title>
        <authorList>
            <person name="Kalnine N."/>
            <person name="Chen X."/>
            <person name="Rolfs A."/>
            <person name="Halleck A."/>
            <person name="Hines L."/>
            <person name="Eisenstein S."/>
            <person name="Koundinya M."/>
            <person name="Raphael J."/>
            <person name="Moreira D."/>
            <person name="Kelley T."/>
            <person name="LaBaer J."/>
            <person name="Lin Y."/>
            <person name="Phelan M."/>
            <person name="Farmer A."/>
        </authorList>
    </citation>
    <scope>NUCLEOTIDE SEQUENCE [LARGE SCALE MRNA] (ISOFORM 2)</scope>
</reference>
<reference key="3">
    <citation type="submission" date="2005-03" db="EMBL/GenBank/DDBJ databases">
        <title>Homo sapiens protein coding cDNA.</title>
        <authorList>
            <person name="Totoki Y."/>
            <person name="Toyoda A."/>
            <person name="Takeda T."/>
            <person name="Sakaki Y."/>
            <person name="Tanaka A."/>
            <person name="Yokoyama S."/>
            <person name="Ohara O."/>
            <person name="Nagase T."/>
            <person name="Kikuno R.F."/>
        </authorList>
    </citation>
    <scope>NUCLEOTIDE SEQUENCE [LARGE SCALE MRNA] (ISOFORM 3)</scope>
    <source>
        <tissue>Brain</tissue>
    </source>
</reference>
<reference key="4">
    <citation type="journal article" date="2006" name="Nature">
        <title>The finished DNA sequence of human chromosome 12.</title>
        <authorList>
            <person name="Scherer S.E."/>
            <person name="Muzny D.M."/>
            <person name="Buhay C.J."/>
            <person name="Chen R."/>
            <person name="Cree A."/>
            <person name="Ding Y."/>
            <person name="Dugan-Rocha S."/>
            <person name="Gill R."/>
            <person name="Gunaratne P."/>
            <person name="Harris R.A."/>
            <person name="Hawes A.C."/>
            <person name="Hernandez J."/>
            <person name="Hodgson A.V."/>
            <person name="Hume J."/>
            <person name="Jackson A."/>
            <person name="Khan Z.M."/>
            <person name="Kovar-Smith C."/>
            <person name="Lewis L.R."/>
            <person name="Lozado R.J."/>
            <person name="Metzker M.L."/>
            <person name="Milosavljevic A."/>
            <person name="Miner G.R."/>
            <person name="Montgomery K.T."/>
            <person name="Morgan M.B."/>
            <person name="Nazareth L.V."/>
            <person name="Scott G."/>
            <person name="Sodergren E."/>
            <person name="Song X.-Z."/>
            <person name="Steffen D."/>
            <person name="Lovering R.C."/>
            <person name="Wheeler D.A."/>
            <person name="Worley K.C."/>
            <person name="Yuan Y."/>
            <person name="Zhang Z."/>
            <person name="Adams C.Q."/>
            <person name="Ansari-Lari M.A."/>
            <person name="Ayele M."/>
            <person name="Brown M.J."/>
            <person name="Chen G."/>
            <person name="Chen Z."/>
            <person name="Clerc-Blankenburg K.P."/>
            <person name="Davis C."/>
            <person name="Delgado O."/>
            <person name="Dinh H.H."/>
            <person name="Draper H."/>
            <person name="Gonzalez-Garay M.L."/>
            <person name="Havlak P."/>
            <person name="Jackson L.R."/>
            <person name="Jacob L.S."/>
            <person name="Kelly S.H."/>
            <person name="Li L."/>
            <person name="Li Z."/>
            <person name="Liu J."/>
            <person name="Liu W."/>
            <person name="Lu J."/>
            <person name="Maheshwari M."/>
            <person name="Nguyen B.-V."/>
            <person name="Okwuonu G.O."/>
            <person name="Pasternak S."/>
            <person name="Perez L.M."/>
            <person name="Plopper F.J.H."/>
            <person name="Santibanez J."/>
            <person name="Shen H."/>
            <person name="Tabor P.E."/>
            <person name="Verduzco D."/>
            <person name="Waldron L."/>
            <person name="Wang Q."/>
            <person name="Williams G.A."/>
            <person name="Zhang J."/>
            <person name="Zhou J."/>
            <person name="Allen C.C."/>
            <person name="Amin A.G."/>
            <person name="Anyalebechi V."/>
            <person name="Bailey M."/>
            <person name="Barbaria J.A."/>
            <person name="Bimage K.E."/>
            <person name="Bryant N.P."/>
            <person name="Burch P.E."/>
            <person name="Burkett C.E."/>
            <person name="Burrell K.L."/>
            <person name="Calderon E."/>
            <person name="Cardenas V."/>
            <person name="Carter K."/>
            <person name="Casias K."/>
            <person name="Cavazos I."/>
            <person name="Cavazos S.R."/>
            <person name="Ceasar H."/>
            <person name="Chacko J."/>
            <person name="Chan S.N."/>
            <person name="Chavez D."/>
            <person name="Christopoulos C."/>
            <person name="Chu J."/>
            <person name="Cockrell R."/>
            <person name="Cox C.D."/>
            <person name="Dang M."/>
            <person name="Dathorne S.R."/>
            <person name="David R."/>
            <person name="Davis C.M."/>
            <person name="Davy-Carroll L."/>
            <person name="Deshazo D.R."/>
            <person name="Donlin J.E."/>
            <person name="D'Souza L."/>
            <person name="Eaves K.A."/>
            <person name="Egan A."/>
            <person name="Emery-Cohen A.J."/>
            <person name="Escotto M."/>
            <person name="Flagg N."/>
            <person name="Forbes L.D."/>
            <person name="Gabisi A.M."/>
            <person name="Garza M."/>
            <person name="Hamilton C."/>
            <person name="Henderson N."/>
            <person name="Hernandez O."/>
            <person name="Hines S."/>
            <person name="Hogues M.E."/>
            <person name="Huang M."/>
            <person name="Idlebird D.G."/>
            <person name="Johnson R."/>
            <person name="Jolivet A."/>
            <person name="Jones S."/>
            <person name="Kagan R."/>
            <person name="King L.M."/>
            <person name="Leal B."/>
            <person name="Lebow H."/>
            <person name="Lee S."/>
            <person name="LeVan J.M."/>
            <person name="Lewis L.C."/>
            <person name="London P."/>
            <person name="Lorensuhewa L.M."/>
            <person name="Loulseged H."/>
            <person name="Lovett D.A."/>
            <person name="Lucier A."/>
            <person name="Lucier R.L."/>
            <person name="Ma J."/>
            <person name="Madu R.C."/>
            <person name="Mapua P."/>
            <person name="Martindale A.D."/>
            <person name="Martinez E."/>
            <person name="Massey E."/>
            <person name="Mawhiney S."/>
            <person name="Meador M.G."/>
            <person name="Mendez S."/>
            <person name="Mercado C."/>
            <person name="Mercado I.C."/>
            <person name="Merritt C.E."/>
            <person name="Miner Z.L."/>
            <person name="Minja E."/>
            <person name="Mitchell T."/>
            <person name="Mohabbat F."/>
            <person name="Mohabbat K."/>
            <person name="Montgomery B."/>
            <person name="Moore N."/>
            <person name="Morris S."/>
            <person name="Munidasa M."/>
            <person name="Ngo R.N."/>
            <person name="Nguyen N.B."/>
            <person name="Nickerson E."/>
            <person name="Nwaokelemeh O.O."/>
            <person name="Nwokenkwo S."/>
            <person name="Obregon M."/>
            <person name="Oguh M."/>
            <person name="Oragunye N."/>
            <person name="Oviedo R.J."/>
            <person name="Parish B.J."/>
            <person name="Parker D.N."/>
            <person name="Parrish J."/>
            <person name="Parks K.L."/>
            <person name="Paul H.A."/>
            <person name="Payton B.A."/>
            <person name="Perez A."/>
            <person name="Perrin W."/>
            <person name="Pickens A."/>
            <person name="Primus E.L."/>
            <person name="Pu L.-L."/>
            <person name="Puazo M."/>
            <person name="Quiles M.M."/>
            <person name="Quiroz J.B."/>
            <person name="Rabata D."/>
            <person name="Reeves K."/>
            <person name="Ruiz S.J."/>
            <person name="Shao H."/>
            <person name="Sisson I."/>
            <person name="Sonaike T."/>
            <person name="Sorelle R.P."/>
            <person name="Sutton A.E."/>
            <person name="Svatek A.F."/>
            <person name="Svetz L.A."/>
            <person name="Tamerisa K.S."/>
            <person name="Taylor T.R."/>
            <person name="Teague B."/>
            <person name="Thomas N."/>
            <person name="Thorn R.D."/>
            <person name="Trejos Z.Y."/>
            <person name="Trevino B.K."/>
            <person name="Ukegbu O.N."/>
            <person name="Urban J.B."/>
            <person name="Vasquez L.I."/>
            <person name="Vera V.A."/>
            <person name="Villasana D.M."/>
            <person name="Wang L."/>
            <person name="Ward-Moore S."/>
            <person name="Warren J.T."/>
            <person name="Wei X."/>
            <person name="White F."/>
            <person name="Williamson A.L."/>
            <person name="Wleczyk R."/>
            <person name="Wooden H.S."/>
            <person name="Wooden S.H."/>
            <person name="Yen J."/>
            <person name="Yoon L."/>
            <person name="Yoon V."/>
            <person name="Zorrilla S.E."/>
            <person name="Nelson D."/>
            <person name="Kucherlapati R."/>
            <person name="Weinstock G."/>
            <person name="Gibbs R.A."/>
        </authorList>
    </citation>
    <scope>NUCLEOTIDE SEQUENCE [LARGE SCALE GENOMIC DNA]</scope>
</reference>
<reference key="5">
    <citation type="journal article" date="2004" name="Genome Res.">
        <title>The status, quality, and expansion of the NIH full-length cDNA project: the Mammalian Gene Collection (MGC).</title>
        <authorList>
            <consortium name="The MGC Project Team"/>
        </authorList>
    </citation>
    <scope>NUCLEOTIDE SEQUENCE [LARGE SCALE MRNA] (ISOFORMS 1 AND 2)</scope>
    <source>
        <tissue>Brain</tissue>
        <tissue>Colon</tissue>
        <tissue>Duodenum</tissue>
    </source>
</reference>
<reference key="6">
    <citation type="journal article" date="2006" name="Cell">
        <title>Global, in vivo, and site-specific phosphorylation dynamics in signaling networks.</title>
        <authorList>
            <person name="Olsen J.V."/>
            <person name="Blagoev B."/>
            <person name="Gnad F."/>
            <person name="Macek B."/>
            <person name="Kumar C."/>
            <person name="Mortensen P."/>
            <person name="Mann M."/>
        </authorList>
    </citation>
    <scope>PHOSPHORYLATION [LARGE SCALE ANALYSIS] AT SER-347</scope>
    <scope>IDENTIFICATION BY MASS SPECTROMETRY [LARGE SCALE ANALYSIS]</scope>
    <source>
        <tissue>Cervix carcinoma</tissue>
    </source>
</reference>
<reference key="7">
    <citation type="journal article" date="2008" name="Proc. Natl. Acad. Sci. U.S.A.">
        <title>A quantitative atlas of mitotic phosphorylation.</title>
        <authorList>
            <person name="Dephoure N."/>
            <person name="Zhou C."/>
            <person name="Villen J."/>
            <person name="Beausoleil S.A."/>
            <person name="Bakalarski C.E."/>
            <person name="Elledge S.J."/>
            <person name="Gygi S.P."/>
        </authorList>
    </citation>
    <scope>PHOSPHORYLATION [LARGE SCALE ANALYSIS] AT SER-283; SER-286; SER-302; SER-304 AND SER-347</scope>
    <scope>IDENTIFICATION BY MASS SPECTROMETRY [LARGE SCALE ANALYSIS]</scope>
    <source>
        <tissue>Cervix carcinoma</tissue>
    </source>
</reference>
<reference key="8">
    <citation type="journal article" date="2009" name="Sci. Signal.">
        <title>Quantitative phosphoproteomic analysis of T cell receptor signaling reveals system-wide modulation of protein-protein interactions.</title>
        <authorList>
            <person name="Mayya V."/>
            <person name="Lundgren D.H."/>
            <person name="Hwang S.-I."/>
            <person name="Rezaul K."/>
            <person name="Wu L."/>
            <person name="Eng J.K."/>
            <person name="Rodionov V."/>
            <person name="Han D.K."/>
        </authorList>
    </citation>
    <scope>PHOSPHORYLATION [LARGE SCALE ANALYSIS] AT SER-347</scope>
    <scope>IDENTIFICATION BY MASS SPECTROMETRY [LARGE SCALE ANALYSIS]</scope>
    <source>
        <tissue>Leukemic T-cell</tissue>
    </source>
</reference>
<reference key="9">
    <citation type="journal article" date="2009" name="Science">
        <title>Lysine acetylation targets protein complexes and co-regulates major cellular functions.</title>
        <authorList>
            <person name="Choudhary C."/>
            <person name="Kumar C."/>
            <person name="Gnad F."/>
            <person name="Nielsen M.L."/>
            <person name="Rehman M."/>
            <person name="Walther T.C."/>
            <person name="Olsen J.V."/>
            <person name="Mann M."/>
        </authorList>
    </citation>
    <scope>ACETYLATION [LARGE SCALE ANALYSIS] AT LYS-326</scope>
    <scope>IDENTIFICATION BY MASS SPECTROMETRY [LARGE SCALE ANALYSIS]</scope>
</reference>
<reference key="10">
    <citation type="journal article" date="2010" name="Sci. Signal.">
        <title>Quantitative phosphoproteomics reveals widespread full phosphorylation site occupancy during mitosis.</title>
        <authorList>
            <person name="Olsen J.V."/>
            <person name="Vermeulen M."/>
            <person name="Santamaria A."/>
            <person name="Kumar C."/>
            <person name="Miller M.L."/>
            <person name="Jensen L.J."/>
            <person name="Gnad F."/>
            <person name="Cox J."/>
            <person name="Jensen T.S."/>
            <person name="Nigg E.A."/>
            <person name="Brunak S."/>
            <person name="Mann M."/>
        </authorList>
    </citation>
    <scope>PHOSPHORYLATION [LARGE SCALE ANALYSIS] AT SER-302; SER-304; SER-306; SER-347; THR-548 AND SER-813</scope>
    <scope>IDENTIFICATION BY MASS SPECTROMETRY [LARGE SCALE ANALYSIS]</scope>
    <source>
        <tissue>Cervix carcinoma</tissue>
    </source>
</reference>
<reference key="11">
    <citation type="journal article" date="2011" name="BMC Syst. Biol.">
        <title>Initial characterization of the human central proteome.</title>
        <authorList>
            <person name="Burkard T.R."/>
            <person name="Planyavsky M."/>
            <person name="Kaupe I."/>
            <person name="Breitwieser F.P."/>
            <person name="Buerckstuemmer T."/>
            <person name="Bennett K.L."/>
            <person name="Superti-Furga G."/>
            <person name="Colinge J."/>
        </authorList>
    </citation>
    <scope>IDENTIFICATION BY MASS SPECTROMETRY [LARGE SCALE ANALYSIS]</scope>
</reference>
<reference key="12">
    <citation type="journal article" date="2011" name="Sci. Signal.">
        <title>System-wide temporal characterization of the proteome and phosphoproteome of human embryonic stem cell differentiation.</title>
        <authorList>
            <person name="Rigbolt K.T."/>
            <person name="Prokhorova T.A."/>
            <person name="Akimov V."/>
            <person name="Henningsen J."/>
            <person name="Johansen P.T."/>
            <person name="Kratchmarova I."/>
            <person name="Kassem M."/>
            <person name="Mann M."/>
            <person name="Olsen J.V."/>
            <person name="Blagoev B."/>
        </authorList>
    </citation>
    <scope>PHOSPHORYLATION [LARGE SCALE ANALYSIS] AT SER-283; SER-302; SER-304 AND SER-347</scope>
    <scope>IDENTIFICATION BY MASS SPECTROMETRY [LARGE SCALE ANALYSIS]</scope>
</reference>
<reference key="13">
    <citation type="journal article" date="2013" name="J. Proteome Res.">
        <title>Toward a comprehensive characterization of a human cancer cell phosphoproteome.</title>
        <authorList>
            <person name="Zhou H."/>
            <person name="Di Palma S."/>
            <person name="Preisinger C."/>
            <person name="Peng M."/>
            <person name="Polat A.N."/>
            <person name="Heck A.J."/>
            <person name="Mohammed S."/>
        </authorList>
    </citation>
    <scope>PHOSPHORYLATION [LARGE SCALE ANALYSIS] AT SER-283; SER-302; SER-347; THR-548 AND SER-813</scope>
    <scope>IDENTIFICATION BY MASS SPECTROMETRY [LARGE SCALE ANALYSIS]</scope>
    <source>
        <tissue>Cervix carcinoma</tissue>
        <tissue>Erythroleukemia</tissue>
    </source>
</reference>
<reference key="14">
    <citation type="journal article" date="2014" name="J. Proteomics">
        <title>An enzyme assisted RP-RPLC approach for in-depth analysis of human liver phosphoproteome.</title>
        <authorList>
            <person name="Bian Y."/>
            <person name="Song C."/>
            <person name="Cheng K."/>
            <person name="Dong M."/>
            <person name="Wang F."/>
            <person name="Huang J."/>
            <person name="Sun D."/>
            <person name="Wang L."/>
            <person name="Ye M."/>
            <person name="Zou H."/>
        </authorList>
    </citation>
    <scope>PHOSPHORYLATION [LARGE SCALE ANALYSIS] AT SER-283 AND SER-347</scope>
    <scope>IDENTIFICATION BY MASS SPECTROMETRY [LARGE SCALE ANALYSIS]</scope>
    <source>
        <tissue>Liver</tissue>
    </source>
</reference>
<reference key="15">
    <citation type="journal article" date="2015" name="Cell Rep.">
        <title>SUMO-2 orchestrates chromatin modifiers in response to DNA damage.</title>
        <authorList>
            <person name="Hendriks I.A."/>
            <person name="Treffers L.W."/>
            <person name="Verlaan-de Vries M."/>
            <person name="Olsen J.V."/>
            <person name="Vertegaal A.C."/>
        </authorList>
    </citation>
    <scope>SUMOYLATION [LARGE SCALE ANALYSIS] AT LYS-848</scope>
    <scope>IDENTIFICATION BY MASS SPECTROMETRY [LARGE SCALE ANALYSIS]</scope>
</reference>
<reference key="16">
    <citation type="journal article" date="2015" name="Mol. Cell. Proteomics">
        <title>System-wide analysis of SUMOylation dynamics in response to replication stress reveals novel small ubiquitin-like modified target proteins and acceptor lysines relevant for genome stability.</title>
        <authorList>
            <person name="Xiao Z."/>
            <person name="Chang J.G."/>
            <person name="Hendriks I.A."/>
            <person name="Sigurdsson J.O."/>
            <person name="Olsen J.V."/>
            <person name="Vertegaal A.C."/>
        </authorList>
    </citation>
    <scope>SUMOYLATION [LARGE SCALE ANALYSIS] AT LYS-566 AND LYS-704</scope>
    <scope>IDENTIFICATION BY MASS SPECTROMETRY [LARGE SCALE ANALYSIS]</scope>
</reference>
<reference key="17">
    <citation type="journal article" date="2017" name="Nat. Struct. Mol. Biol.">
        <title>Site-specific mapping of the human SUMO proteome reveals co-modification with phosphorylation.</title>
        <authorList>
            <person name="Hendriks I.A."/>
            <person name="Lyon D."/>
            <person name="Young C."/>
            <person name="Jensen L.J."/>
            <person name="Vertegaal A.C."/>
            <person name="Nielsen M.L."/>
        </authorList>
    </citation>
    <scope>SUMOYLATION [LARGE SCALE ANALYSIS] AT LYS-564; LYS-566; LYS-568; LYS-592; LYS-704; LYS-787 AND LYS-848</scope>
    <scope>IDENTIFICATION BY MASS SPECTROMETRY [LARGE SCALE ANALYSIS]</scope>
</reference>
<reference key="18">
    <citation type="journal article" date="1999" name="Mol. Cell">
        <title>Reconstitution of a core chromatin remodeling complex from SWI/SNF subunits.</title>
        <authorList>
            <person name="Phelan M.L."/>
            <person name="Sif S."/>
            <person name="Narlikar G.J."/>
            <person name="Kingston R.E."/>
        </authorList>
    </citation>
    <scope>STIMULATION OF THE CHROMATIN-REMODELING ACTIVITY OF SMARCA4</scope>
</reference>
<reference key="19">
    <citation type="journal article" date="2000" name="Genes Dev.">
        <title>Functional selectivity of recombinant mammalian SWI/SNF subunits.</title>
        <authorList>
            <person name="Kadam S."/>
            <person name="McAlpine G.S."/>
            <person name="Phelan M.L."/>
            <person name="Kingston R.E."/>
            <person name="Jones K.A."/>
            <person name="Emerson B.M."/>
        </authorList>
    </citation>
    <scope>FUNCTION</scope>
</reference>
<reference key="20">
    <citation type="journal article" date="2001" name="Genes Dev.">
        <title>Purification and characterization of mSin3A-containing Brg1 and hBrm chromatin remodeling complexes.</title>
        <authorList>
            <person name="Sif S."/>
            <person name="Saurin A.J."/>
            <person name="Imbalzano A.N."/>
            <person name="Kingston R.E."/>
        </authorList>
    </citation>
    <scope>INTERACTION WITH SIN3A</scope>
</reference>
<reference key="21">
    <citation type="journal article" date="2002" name="J. Biol. Chem.">
        <title>REST repression of neuronal genes requires components of the hSWI.SNF complex.</title>
        <authorList>
            <person name="Battaglioli E."/>
            <person name="Andres M.E."/>
            <person name="Rose D.W."/>
            <person name="Chenoweth J.G."/>
            <person name="Rosenfeld M.G."/>
            <person name="Anderson M.E."/>
            <person name="Mandel G."/>
        </authorList>
    </citation>
    <scope>INTERACTION WITH RCOR1</scope>
</reference>
<reference key="22">
    <citation type="journal article" date="2003" name="Mol. Cell. Biol.">
        <title>BAF60a mediates critical interactions between nuclear receptors and the BRG1 chromatin-remodeling complex for transactivation.</title>
        <authorList>
            <person name="Hsiao P.W."/>
            <person name="Fryer C.J."/>
            <person name="Trotter K.W."/>
            <person name="Wang W."/>
            <person name="Archer T.K."/>
        </authorList>
    </citation>
    <scope>INTERACTION WITH SMARD1</scope>
</reference>
<reference key="23">
    <citation type="journal article" date="2008" name="Genes Dev.">
        <title>Regulation of muscle development by DPF3, a novel histone acetylation and methylation reader of the BAF chromatin remodeling complex.</title>
        <authorList>
            <person name="Lange M."/>
            <person name="Kaynak B."/>
            <person name="Forster U.B."/>
            <person name="Toenjes M."/>
            <person name="Fischer J.J."/>
            <person name="Grimm C."/>
            <person name="Schlesinger J."/>
            <person name="Just S."/>
            <person name="Dunkel I."/>
            <person name="Krueger T."/>
            <person name="Mebus S."/>
            <person name="Lehrach H."/>
            <person name="Lurz R."/>
            <person name="Gobom J."/>
            <person name="Rottbauer W."/>
            <person name="Abdelilah-Seyfried S."/>
            <person name="Sperling S."/>
        </authorList>
    </citation>
    <scope>IDENTIFICATION IN THE BAF COMPLEX</scope>
    <scope>IDENTIFICATION BY MASS SPECTROMETRY</scope>
</reference>
<reference key="24">
    <citation type="journal article" date="2012" name="J. Biol. Chem.">
        <title>SWI/SNF chromatin-remodeling factors: multiscale analyses and diverse functions.</title>
        <authorList>
            <person name="Euskirchen G."/>
            <person name="Auerbach R.K."/>
            <person name="Snyder M."/>
        </authorList>
    </citation>
    <scope>REVIEW ON SWI/SNF CHROMATIN REMODELING COMPLEXES</scope>
</reference>
<reference key="25">
    <citation type="journal article" date="2014" name="Cell Death Dis.">
        <title>The cockayne syndrome B protein is essential for neuronal differentiation and neuritogenesis.</title>
        <authorList>
            <person name="Ciaffardini F."/>
            <person name="Nicolai S."/>
            <person name="Caputo M."/>
            <person name="Canu G."/>
            <person name="Paccosi E."/>
            <person name="Costantino M."/>
            <person name="Frontini M."/>
            <person name="Balajee A.S."/>
            <person name="Proietti-De-Santis L."/>
        </authorList>
    </citation>
    <scope>INTERACTION WITH ERCC6</scope>
</reference>
<reference key="26">
    <citation type="journal article" date="2015" name="Sci. Adv.">
        <title>Mammalian SWI/SNF chromatin remodeling complexes and cancer: Mechanistic insights gained from human genomics.</title>
        <authorList>
            <person name="Kadoch C."/>
            <person name="Crabtree G.R."/>
        </authorList>
    </citation>
    <scope>REVIEW ON SWI/SNF CHROMATIN REMODELING COMPLEXES</scope>
</reference>
<reference key="27">
    <citation type="journal article" date="2017" name="Proc. Natl. Acad. Sci. U.S.A.">
        <title>Histone-binding of DPF2 mediates its repressive role in myeloid differentiation.</title>
        <authorList>
            <person name="Huber F.M."/>
            <person name="Greenblatt S.M."/>
            <person name="Davenport A.M."/>
            <person name="Martinez C."/>
            <person name="Xu Y."/>
            <person name="Vu L.P."/>
            <person name="Nimer S.D."/>
            <person name="Hoelz A."/>
        </authorList>
    </citation>
    <scope>INTERACTION WITH DPF2</scope>
</reference>
<reference key="28">
    <citation type="journal article" date="2019" name="Am. J. Hum. Genet.">
        <title>Expanding the Spectrum of BAF-Related Disorders: De Novo Variants in SMARCC2 Cause a Syndrome with Intellectual Disability and Developmental Delay.</title>
        <authorList>
            <consortium name="Undiagnosed Diseases Network"/>
            <person name="Machol K."/>
            <person name="Rousseau J."/>
            <person name="Ehresmann S."/>
            <person name="Garcia T."/>
            <person name="Nguyen T.T.M."/>
            <person name="Spillmann R.C."/>
            <person name="Sullivan J.A."/>
            <person name="Shashi V."/>
            <person name="Jiang Y.H."/>
            <person name="Stong N."/>
            <person name="Fiala E."/>
            <person name="Willing M."/>
            <person name="Pfundt R."/>
            <person name="Kleefstra T."/>
            <person name="Cho M.T."/>
            <person name="McLaughlin H."/>
            <person name="Rosello Piera M."/>
            <person name="Orellana C."/>
            <person name="Martinez F."/>
            <person name="Caro-Llopis A."/>
            <person name="Monfort S."/>
            <person name="Roscioli T."/>
            <person name="Nixon C.Y."/>
            <person name="Buckley M.F."/>
            <person name="Turner A."/>
            <person name="Jones W.D."/>
            <person name="van Hasselt P.M."/>
            <person name="Hofstede F.C."/>
            <person name="van Gassen K.L.I."/>
            <person name="Brooks A.S."/>
            <person name="van Slegtenhorst M.A."/>
            <person name="Lachlan K."/>
            <person name="Sebastian J."/>
            <person name="Madan-Khetarpal S."/>
            <person name="Sonal D."/>
            <person name="Sakkubai N."/>
            <person name="Thevenon J."/>
            <person name="Faivre L."/>
            <person name="Maurel A."/>
            <person name="Petrovski S."/>
            <person name="Krantz I.D."/>
            <person name="Tarpinian J.M."/>
            <person name="Rosenfeld J.A."/>
            <person name="Lee B.H."/>
            <person name="Campeau P.M."/>
        </authorList>
    </citation>
    <scope>INVOLVEMENT IN CSS8</scope>
    <scope>VARIANTS CSS8 ASP-134; 241-TRP--GLN-1214 DEL; PRO-609; PRO-610; PRO-613; ARG-635; VAL-896 AND GLY-900</scope>
</reference>
<comment type="function">
    <text evidence="1 7 8 10 17 18">Involved in transcriptional activation and repression of select genes by chromatin remodeling (alteration of DNA-nucleosome topology). Component of SWI/SNF chromatin remodeling complexes that carry out key enzymatic activities, changing chromatin structure by altering DNA-histone contacts within a nucleosome in an ATP-dependent manner (PubMed:11018012). Can stimulate the ATPase activity of the catalytic subunit of these complexes (PubMed:10078207). May be required for CoREST dependent repression of neuronal specific gene promoters in non-neuronal cells (PubMed:12192000). Belongs to the neural progenitors-specific chromatin remodeling complex (npBAF complex) and the neuron-specific chromatin remodeling complex (nBAF complex). During neural development a switch from a stem/progenitor to a postmitotic chromatin remodeling mechanism occurs as neurons exit the cell cycle and become committed to their adult state. The transition from proliferating neural stem/progenitor cells to postmitotic neurons requires a switch in subunit composition of the npBAF and nBAF complexes. As neural progenitors exit mitosis and differentiate into neurons, npBAF complexes which contain ACTL6A/BAF53A and PHF10/BAF45A, are exchanged for homologous alternative ACTL6B/BAF53B and DPF1/BAF45B or DPF3/BAF45C subunits in neuron-specific complexes (nBAF). The npBAF complex is essential for the self-renewal/proliferative capacity of the multipotent neural stem cells. The nBAF complex along with CREST plays a role regulating the activity of genes essential for dendrite growth (By similarity). Critical regulator of myeloid differentiation, controlling granulocytopoiesis and the expression of genes involved in neutrophil granule formation (By similarity).</text>
</comment>
<comment type="subunit">
    <text evidence="1 9 10 11 12 13 14 17 18">Component of the multiprotein chromatin-remodeling complexes SWI/SNF: SWI/SNF-A (BAF), SWI/SNF-B (PBAF) and related complexes. The canonical complex contains a catalytic subunit (either SMARCA4/BRG1/BAF190A or SMARCA2/BRM/BAF190B) and at least SMARCE1, ACTL6A/BAF53, SMARCC1/BAF155, SMARCC2/BAF170, and SMARCB1/SNF5/BAF47. Other subunits specific to each of the complexes may also be present permitting several possible combinations developmentally and tissue specific (Probable). Component of the BAF complex, which includes at least actin (ACTB), ARID1A/BAF250A, ARID1B/BAF250B, SMARCA2/BRM, SMARCA4/BRG1, ACTL6A/BAF53, ACTL6B/BAF53B, SMARCE1/BAF57, SMARCC1/BAF155, SMARCC2/BAF170, SMARCB1/SNF5/INI1, and one or more SMARCD1/BAF60A, SMARCD2/BAF60B, or SMARCD3/BAF60C. In muscle cells, the BAF complex also contains DPF3 (PubMed:18765789). Component of neural progenitors-specific chromatin remodeling complex (npBAF complex) composed of at least, ARID1A/BAF250A or ARID1B/BAF250B, SMARCD1/BAF60A, SMARCD3/BAF60C, SMARCA2/BRM/BAF190B, SMARCA4/BRG1/BAF190A, SMARCB1/BAF47, SMARCC1/BAF155, SMARCE1/BAF57, SMARCC2/BAF170, PHF10/BAF45A, ACTL6A/BAF53A and actin. Component of neuron-specific chromatin remodeling complex (nBAF complex) composed of at least, ARID1A/BAF250A or ARID1B/BAF250B, SMARCD1/BAF60A, SMARCD3/BAF60C, SMARCA2/BRM/BAF190B, SMARCA4/BRG1/BAF190A, SMARCB1/BAF47, SMARCC1/BAF155, SMARCE1/BAF57, SMARCC2/BAF170, DPF1/BAF45B, DPF3/BAF45C, ACTL6B/BAF53B and actin. Component of the SWI/SNF-B (PBAF) chromatin remodeling complex, at least composed of SMARCA4/BRG1, SMARCB1/BAF47/SNF5, ACTL6A/BAF53A or ACTL6B/BAF53B, SMARCE1/BAF57, SMARCD1/BAF60A, SMARCD2/BAF60B, perhaps SMARCD3/BAF60C, SMARCC1/BAF155, SMARCC2/BAF170, PBRM1/BAF180, ARID2/BAF200 and actin (PubMed:22952240, PubMed:26601204). May also interact with the SIN3A histone deacetylase transcription repressor complex in conjunction with SMARCA2 and SMARCA4 (PubMed:11238380). Interacts with SMARD1 (PubMed:12917342). Interacts with KDM6B (By similarity). Interaction with RCOR1 (PubMed:12192000). Interacts with DPF2 (PubMed:28533407). Interacts with ERCC6 (PubMed:24874740). Interacts with FOS (By similarity).</text>
</comment>
<comment type="interaction">
    <interactant intactId="EBI-357418">
        <id>Q8TAQ2</id>
    </interactant>
    <interactant intactId="EBI-679921">
        <id>Q8NFD5</id>
        <label>ARID1B</label>
    </interactant>
    <organismsDiffer>false</organismsDiffer>
    <experiments>6</experiments>
</comment>
<comment type="interaction">
    <interactant intactId="EBI-357418">
        <id>Q8TAQ2</id>
    </interactant>
    <interactant intactId="EBI-3951683">
        <id>Q9P2D1</id>
        <label>CHD7</label>
    </interactant>
    <organismsDiffer>false</organismsDiffer>
    <experiments>4</experiments>
</comment>
<comment type="interaction">
    <interactant intactId="EBI-357418">
        <id>Q8TAQ2</id>
    </interactant>
    <interactant intactId="EBI-947774">
        <id>O75420</id>
        <label>GIGYF1</label>
    </interactant>
    <organismsDiffer>false</organismsDiffer>
    <experiments>3</experiments>
</comment>
<comment type="interaction">
    <interactant intactId="EBI-357418">
        <id>Q8TAQ2</id>
    </interactant>
    <interactant intactId="EBI-679562">
        <id>P51531</id>
        <label>SMARCA2</label>
    </interactant>
    <organismsDiffer>false</organismsDiffer>
    <experiments>4</experiments>
</comment>
<comment type="interaction">
    <interactant intactId="EBI-357418">
        <id>Q8TAQ2</id>
    </interactant>
    <interactant intactId="EBI-358489">
        <id>Q96GM5</id>
        <label>SMARCD1</label>
    </interactant>
    <organismsDiffer>false</organismsDiffer>
    <experiments>9</experiments>
</comment>
<comment type="interaction">
    <interactant intactId="EBI-357418">
        <id>Q8TAQ2</id>
    </interactant>
    <interactant intactId="EBI-2682386">
        <id>Q96PV0</id>
        <label>SYNGAP1</label>
    </interactant>
    <organismsDiffer>false</organismsDiffer>
    <experiments>3</experiments>
</comment>
<comment type="interaction">
    <interactant intactId="EBI-357418">
        <id>Q8TAQ2</id>
    </interactant>
    <interactant intactId="EBI-750109">
        <id>Q9NYB0</id>
        <label>TERF2IP</label>
    </interactant>
    <organismsDiffer>false</organismsDiffer>
    <experiments>2</experiments>
</comment>
<comment type="interaction">
    <interactant intactId="EBI-357418">
        <id>Q8TAQ2</id>
    </interactant>
    <interactant intactId="EBI-1047967">
        <id>Q86UE8</id>
        <label>TLK2</label>
    </interactant>
    <organismsDiffer>false</organismsDiffer>
    <experiments>3</experiments>
</comment>
<comment type="interaction">
    <interactant intactId="EBI-11990400">
        <id>Q8TAQ2-2</id>
    </interactant>
    <interactant intactId="EBI-466029">
        <id>P42858</id>
        <label>HTT</label>
    </interactant>
    <organismsDiffer>false</organismsDiffer>
    <experiments>3</experiments>
</comment>
<comment type="interaction">
    <interactant intactId="EBI-11990400">
        <id>Q8TAQ2-2</id>
    </interactant>
    <interactant intactId="EBI-3044087">
        <id>Q7Z3Y8</id>
        <label>KRT27</label>
    </interactant>
    <organismsDiffer>false</organismsDiffer>
    <experiments>3</experiments>
</comment>
<comment type="interaction">
    <interactant intactId="EBI-11990400">
        <id>Q8TAQ2-2</id>
    </interactant>
    <interactant intactId="EBI-358436">
        <id>Q12824-2</id>
        <label>SMARCB1</label>
    </interactant>
    <organismsDiffer>false</organismsDiffer>
    <experiments>4</experiments>
</comment>
<comment type="subcellular location">
    <subcellularLocation>
        <location>Nucleus</location>
    </subcellularLocation>
</comment>
<comment type="alternative products">
    <event type="alternative splicing"/>
    <isoform>
        <id>Q8TAQ2-1</id>
        <name>1</name>
        <name>SMARCC2a</name>
        <sequence type="displayed"/>
    </isoform>
    <isoform>
        <id>Q8TAQ2-2</id>
        <name>2</name>
        <name>SMARCC2b</name>
        <sequence type="described" ref="VSP_012490 VSP_012491"/>
    </isoform>
    <isoform>
        <id>Q8TAQ2-3</id>
        <name>3</name>
        <sequence type="described" ref="VSP_012490 VSP_044647"/>
    </isoform>
</comment>
<comment type="tissue specificity">
    <text>Ubiquitously expressed.</text>
</comment>
<comment type="PTM">
    <text evidence="1">Mono-ADP-ribosylation at Lys-312 by SIRT6 promotes recruitment to the enhancer region of the Heme oxygenase-1 (HO-1) locus, leading to transcription activation of the locus.</text>
</comment>
<comment type="disease" evidence="15">
    <disease id="DI-05497">
        <name>Coffin-Siris syndrome 8</name>
        <acronym>CSS8</acronym>
        <description>A form of Coffin-Siris syndrome, a congenital multiple malformation syndrome with broad phenotypic and genetic variability. Cardinal features are intellectual disability, coarse facial features, hypertrichosis, and hypoplastic or absent fifth digit nails or phalanges. Additional features include malformations of the cardiac, gastrointestinal, genitourinary, and/or central nervous systems. Sucking/feeding difficulties, poor growth, ophthalmologic abnormalities, hearing impairment, and spinal anomalies are common findings. CSS8 patients manifest prominent speech impairment, hypotonia, feeding difficulties, behavioral abnormalities, and dysmorphic features such as hypertrichosis, thick eyebrows, thin upper lip vermilion, and upturned nose. CSS8 inheritance is autosomal dominant.</description>
        <dbReference type="MIM" id="618362"/>
    </disease>
    <text>The disease may be caused by variants affecting the gene represented in this entry.</text>
</comment>
<comment type="similarity">
    <text evidence="21">Belongs to the SMARCC family.</text>
</comment>
<comment type="sequence caution" evidence="21">
    <conflict type="erroneous initiation">
        <sequence resource="EMBL-CDS" id="BAD92243"/>
    </conflict>
    <text>Extended N-terminus.</text>
</comment>
<sequence>MAVRKKDGGPNVKYYEAADTVTQFDNVRLWLGKNYKKYIQAEPPTNKSLSSLVVQLLQFQEEVFGKHVSNAPLTKLPIKCFLDFKAGGSLCHILAAAYKFKSDQGWRRYDFQNPSRMDRNVEMFMTIEKSLVQNNCLSRPNIFLCPEIEPKLLGKLKDIIKRHQGTVTEDKNNASHVVYPVPGNLEEEEWVRPVMKRDKQVLLHWGYYPDSYDTWIPASEIEASVEDAPTPEKPRKVHAKWILDTDTFNEWMNEEDYEVNDDKNPVSRRKKISAKTLTDEVNSPDSDRRDKKGGNYKKRKRSPSPSPTPEAKKKNAKKGPSTPYTKSKRGHREEEQEDLTKDMDEPSPVPNVEEVTLPKTVNTKKDSESAPVKGGTMTDLDEQEDESMETTGKDEDENSTGNKGEQTKNPDLHEDNVTEQTHHIIIPSYAAWFDYNSVHAIERRALPEFFNGKNKSKTPEIYLAYRNFMIDTYRLNPQEYLTSTACRRNLAGDVCAIMRVHAFLEQWGLINYQVDAESRPTPMGPPPTSHFHVLADTPSGLVPLQPKTPQQTSASQQMLNFPDKGKEKPTDMQNFGLRTDMYTKKNVPSKSKAAASATREWTEQETLLLLEALEMYKDDWNKVSEHVGSRTQDECILHFLRLPIEDPYLEDSEASLGPLAYQPIPFSQSGNPVMSTVAFLASVVDPRVASAAAKSALEEFSKMKEEVPTALVEAHVRKVEEAAKVTGKADPAFGLESSGIAGTTSDEPERIEESGNDEARVEGQATDEKKEPKEPREGGGAIEEEAKEKTSEAPKKDEEKGKEGDSEKESEKSDGDPIVDPEKEKEPKEGQEEVLKEVVESEGERKTKVERDIGEGNLSTAAAAALAAAAVKAKHLAAVEERKIKSLVALLVETQMKKLEIKLRHFEELETIMDREREALEYQRQQLLADRQAFHMEQLKYAEMRARQQHFQQMHQQQQQPPPALPPGSQPIPPTGAAGPPAVHGLAVAPASVVPAPAGSGAPPGSLGPSEQIGQAGSTAGPQQQQPAGAPQPGAVPPGVPPPGPHGPSPFPNQQTPPSMMPGAVPGSGHPGVAGNAPLGLPFGMPPPPPPPAPSIIPFGSLADSISINLPAPPNLHGHHHHLPFAPGTLPPPNLPVSMANPLHPNLPATTTMPSSLPLGPGLGSAAAQSPAIVAAVQGNLLPSASPLPDPGTPLPPDPTAPSPGTVTPVPPPQ</sequence>
<dbReference type="EMBL" id="U66616">
    <property type="protein sequence ID" value="AAC50694.1"/>
    <property type="molecule type" value="mRNA"/>
</dbReference>
<dbReference type="EMBL" id="BT009924">
    <property type="protein sequence ID" value="AAP88926.1"/>
    <property type="molecule type" value="mRNA"/>
</dbReference>
<dbReference type="EMBL" id="AB209006">
    <property type="protein sequence ID" value="BAD92243.1"/>
    <property type="status" value="ALT_INIT"/>
    <property type="molecule type" value="mRNA"/>
</dbReference>
<dbReference type="EMBL" id="AC073896">
    <property type="status" value="NOT_ANNOTATED_CDS"/>
    <property type="molecule type" value="Genomic_DNA"/>
</dbReference>
<dbReference type="EMBL" id="BC009067">
    <property type="protein sequence ID" value="AAH09067.1"/>
    <property type="molecule type" value="mRNA"/>
</dbReference>
<dbReference type="EMBL" id="BC013045">
    <property type="protein sequence ID" value="AAH13045.1"/>
    <property type="molecule type" value="mRNA"/>
</dbReference>
<dbReference type="EMBL" id="BC026222">
    <property type="protein sequence ID" value="AAH26222.1"/>
    <property type="molecule type" value="mRNA"/>
</dbReference>
<dbReference type="CCDS" id="CCDS55835.1">
    <molecule id="Q8TAQ2-3"/>
</dbReference>
<dbReference type="CCDS" id="CCDS8907.1">
    <molecule id="Q8TAQ2-1"/>
</dbReference>
<dbReference type="CCDS" id="CCDS8908.1">
    <molecule id="Q8TAQ2-2"/>
</dbReference>
<dbReference type="RefSeq" id="NP_001123892.1">
    <molecule id="Q8TAQ2-3"/>
    <property type="nucleotide sequence ID" value="NM_001130420.3"/>
</dbReference>
<dbReference type="RefSeq" id="NP_001317217.1">
    <property type="nucleotide sequence ID" value="NM_001330288.1"/>
</dbReference>
<dbReference type="RefSeq" id="NP_003066.2">
    <molecule id="Q8TAQ2-1"/>
    <property type="nucleotide sequence ID" value="NM_003075.4"/>
</dbReference>
<dbReference type="RefSeq" id="NP_620706.1">
    <molecule id="Q8TAQ2-2"/>
    <property type="nucleotide sequence ID" value="NM_139067.4"/>
</dbReference>
<dbReference type="PDB" id="6KAG">
    <property type="method" value="X-ray"/>
    <property type="resolution" value="2.60 A"/>
    <property type="chains" value="B/C=325-518"/>
</dbReference>
<dbReference type="PDB" id="6LTH">
    <property type="method" value="EM"/>
    <property type="resolution" value="3.00 A"/>
    <property type="chains" value="N/O=1-1214"/>
</dbReference>
<dbReference type="PDB" id="6LTJ">
    <property type="method" value="EM"/>
    <property type="resolution" value="3.70 A"/>
    <property type="chains" value="N/O=1-1214"/>
</dbReference>
<dbReference type="PDB" id="7VDV">
    <property type="method" value="EM"/>
    <property type="resolution" value="3.40 A"/>
    <property type="chains" value="W/X=1-1214"/>
</dbReference>
<dbReference type="PDB" id="7Y8R">
    <property type="method" value="EM"/>
    <property type="resolution" value="4.40 A"/>
    <property type="chains" value="N/O=1-1214"/>
</dbReference>
<dbReference type="PDBsum" id="6KAG"/>
<dbReference type="PDBsum" id="6LTH"/>
<dbReference type="PDBsum" id="6LTJ"/>
<dbReference type="PDBsum" id="7VDV"/>
<dbReference type="PDBsum" id="7Y8R"/>
<dbReference type="EMDB" id="EMD-0974"/>
<dbReference type="EMDB" id="EMD-31926"/>
<dbReference type="EMDB" id="EMD-33684"/>
<dbReference type="SMR" id="Q8TAQ2"/>
<dbReference type="BioGRID" id="112485">
    <property type="interactions" value="345"/>
</dbReference>
<dbReference type="ComplexPortal" id="CPX-1164">
    <property type="entry name" value="SWI/SNF ATP-dependent chromatin remodeling complex, ACTL6A-ARID1A-SMARCA2 variant"/>
</dbReference>
<dbReference type="ComplexPortal" id="CPX-1194">
    <property type="entry name" value="Muscle cell-specific SWI/SNF ATP-dependent chromatin remodeling complex, ACTL6A-ARID1A-SMARCA2 variant"/>
</dbReference>
<dbReference type="ComplexPortal" id="CPX-1196">
    <property type="entry name" value="Polybromo-associated SWI/SNF ATP-dependent chromatin remodeling complex, ACTL6B variant"/>
</dbReference>
<dbReference type="ComplexPortal" id="CPX-1199">
    <property type="entry name" value="Polybromo-associated SWI/SNF ATP-dependent chromatin remodeling complex, ACTL6A variant"/>
</dbReference>
<dbReference type="ComplexPortal" id="CPX-1201">
    <property type="entry name" value="Neural progenitor-specific SWI/SNF ATP-dependent chromatin remodeling complex, ARID1A-SMARCA2 variant"/>
</dbReference>
<dbReference type="ComplexPortal" id="CPX-1202">
    <property type="entry name" value="Neuron-specific SWI/SNF ATP-dependent chromatin remodeling complex, ARID1A-SMARCA2 variant"/>
</dbReference>
<dbReference type="ComplexPortal" id="CPX-1203">
    <property type="entry name" value="Brain-specific SWI/SNF ATP-dependent chromatin remodeling complex, ARID1A-SMARCA2 variant"/>
</dbReference>
<dbReference type="ComplexPortal" id="CPX-1204">
    <property type="entry name" value="SWI/SNF ATP-dependent chromatin remodeling complex, ACTL6A-ARID1A-SMARCA4 variant"/>
</dbReference>
<dbReference type="ComplexPortal" id="CPX-1205">
    <property type="entry name" value="SWI/SNF ATP-dependent chromatin remodeling complex, ACTL6A-ARID1B-SMARCA2 variant"/>
</dbReference>
<dbReference type="ComplexPortal" id="CPX-1206">
    <property type="entry name" value="SWI/SNF ATP-dependent chromatin remodeling complex, ACTL6A-ARID1B-SMARCA4 variant"/>
</dbReference>
<dbReference type="ComplexPortal" id="CPX-1207">
    <property type="entry name" value="SWI/SNF ATP-dependent chromatin remodeling complex, ACTL6B-ARID1A-SMARCA2 variant"/>
</dbReference>
<dbReference type="ComplexPortal" id="CPX-1209">
    <property type="entry name" value="SWI/SNF ATP-dependent chromatin remodeling complex, ACTL6B-ARID1A-SMARCA4 variant"/>
</dbReference>
<dbReference type="ComplexPortal" id="CPX-1210">
    <property type="entry name" value="SWI/SNF ATP-dependent chromatin remodeling complex, ACTL6B-ARID1B-SMARCA2 variant"/>
</dbReference>
<dbReference type="ComplexPortal" id="CPX-1211">
    <property type="entry name" value="SWI/SNF ATP-dependent chromatin remodeling complex, ACTL6B-ARID1B-SMARCA4 variant"/>
</dbReference>
<dbReference type="ComplexPortal" id="CPX-1212">
    <property type="entry name" value="Neural progenitor-specific SWI/SNF ATP-dependent chromatin remodeling complex, ARID1A-SMARCA4 variant"/>
</dbReference>
<dbReference type="ComplexPortal" id="CPX-1213">
    <property type="entry name" value="Neural progenitor-specific SWI/SNF ATP-dependent chromatin remodeling complex, ARID1B-SMARCA2 variant"/>
</dbReference>
<dbReference type="ComplexPortal" id="CPX-1215">
    <property type="entry name" value="Neural progenitor-specific SWI/SNF ATP-dependent chromatin remodeling complex, ARID1B-SMARCA4 variant"/>
</dbReference>
<dbReference type="ComplexPortal" id="CPX-1216">
    <property type="entry name" value="Neuron-specific SWI/SNF ATP-dependent chromatin remodeling complex, ARID1A-SMARCA4 variant"/>
</dbReference>
<dbReference type="ComplexPortal" id="CPX-1217">
    <property type="entry name" value="Neuron-specific SWI/SNF ATP-dependent chromatin remodeling complex, ARID1B-SMARCA2 variant"/>
</dbReference>
<dbReference type="ComplexPortal" id="CPX-1218">
    <property type="entry name" value="Neuron-specific SWI/SNF ATP-dependent chromatin remodeling complex, ARID1B-SMARCA4 variant"/>
</dbReference>
<dbReference type="ComplexPortal" id="CPX-1219">
    <property type="entry name" value="Brain-specific SWI/SNF ATP-dependent chromatin remodeling complex, ARID1A-SMARCA4 variant"/>
</dbReference>
<dbReference type="ComplexPortal" id="CPX-1220">
    <property type="entry name" value="Brain-specific SWI/SNF ATP-dependent chromatin remodeling complex, ARID1B-SMARCA2 variant"/>
</dbReference>
<dbReference type="ComplexPortal" id="CPX-1221">
    <property type="entry name" value="Brain-specific SWI/SNF ATP-dependent chromatin remodeling complex, ARID1B-SMARCA4 variant"/>
</dbReference>
<dbReference type="ComplexPortal" id="CPX-1222">
    <property type="entry name" value="Muscle cell-specific SWI/SNF ATP-dependent chromatin remodeling complex, ACTL6A-ARID1A-SMARCA4 variant"/>
</dbReference>
<dbReference type="ComplexPortal" id="CPX-1223">
    <property type="entry name" value="Muscle cell-specific SWI/SNF ATP-dependent chromatin remodeling complex, ACTL6A-ARID1B-SMARCA2 variant"/>
</dbReference>
<dbReference type="ComplexPortal" id="CPX-1224">
    <property type="entry name" value="Muscle cell-specific SWI/SNF ATP-dependent chromatin remodeling complex, ACTL6A-ARID1B-SMARCA4 variant"/>
</dbReference>
<dbReference type="ComplexPortal" id="CPX-1225">
    <property type="entry name" value="Muscle cell-specific SWI/SNF ATP-dependent chromatin remodeling complex, ACTL6B-ARID1A-SMARCA2 variant"/>
</dbReference>
<dbReference type="ComplexPortal" id="CPX-1226">
    <property type="entry name" value="Muscle cell-specific SWI/SNF ATP-dependent chromatin remodeling complex, ACTL6B-ARID1A-SMARCA4 variant"/>
</dbReference>
<dbReference type="ComplexPortal" id="CPX-1227">
    <property type="entry name" value="Muscle cell-specific SWI/SNF ATP-dependent chromatin remodeling complex, ACTL6B-ARID1B-SMARCA2 variant"/>
</dbReference>
<dbReference type="ComplexPortal" id="CPX-1228">
    <property type="entry name" value="Muscle cell-specific SWI/SNF ATP-dependent chromatin remodeling complex, ACTL6B-ARID1B-SMARCA4 variant"/>
</dbReference>
<dbReference type="CORUM" id="Q8TAQ2"/>
<dbReference type="DIP" id="DIP-27611N"/>
<dbReference type="FunCoup" id="Q8TAQ2">
    <property type="interactions" value="3035"/>
</dbReference>
<dbReference type="IntAct" id="Q8TAQ2">
    <property type="interactions" value="142"/>
</dbReference>
<dbReference type="MINT" id="Q8TAQ2"/>
<dbReference type="STRING" id="9606.ENSP00000449396"/>
<dbReference type="GlyGen" id="Q8TAQ2">
    <property type="glycosylation" value="5 sites, 1 O-linked glycan (1 site)"/>
</dbReference>
<dbReference type="iPTMnet" id="Q8TAQ2"/>
<dbReference type="PhosphoSitePlus" id="Q8TAQ2"/>
<dbReference type="SwissPalm" id="Q8TAQ2"/>
<dbReference type="BioMuta" id="SMARCC2"/>
<dbReference type="DMDM" id="57012959"/>
<dbReference type="jPOST" id="Q8TAQ2"/>
<dbReference type="MassIVE" id="Q8TAQ2"/>
<dbReference type="PaxDb" id="9606-ENSP00000267064"/>
<dbReference type="PeptideAtlas" id="Q8TAQ2"/>
<dbReference type="ProteomicsDB" id="28640"/>
<dbReference type="ProteomicsDB" id="73906">
    <molecule id="Q8TAQ2-1"/>
</dbReference>
<dbReference type="ProteomicsDB" id="73907">
    <molecule id="Q8TAQ2-2"/>
</dbReference>
<dbReference type="Pumba" id="Q8TAQ2"/>
<dbReference type="ABCD" id="Q8TAQ2">
    <property type="antibodies" value="1 sequenced antibody"/>
</dbReference>
<dbReference type="Antibodypedia" id="3811">
    <property type="antibodies" value="259 antibodies from 31 providers"/>
</dbReference>
<dbReference type="DNASU" id="6601"/>
<dbReference type="Ensembl" id="ENST00000267064.8">
    <molecule id="Q8TAQ2-1"/>
    <property type="protein sequence ID" value="ENSP00000267064.4"/>
    <property type="gene ID" value="ENSG00000139613.12"/>
</dbReference>
<dbReference type="Ensembl" id="ENST00000347471.8">
    <molecule id="Q8TAQ2-2"/>
    <property type="protein sequence ID" value="ENSP00000302919.4"/>
    <property type="gene ID" value="ENSG00000139613.12"/>
</dbReference>
<dbReference type="Ensembl" id="ENST00000394023.7">
    <molecule id="Q8TAQ2-3"/>
    <property type="protein sequence ID" value="ENSP00000377591.3"/>
    <property type="gene ID" value="ENSG00000139613.12"/>
</dbReference>
<dbReference type="GeneID" id="6601"/>
<dbReference type="KEGG" id="hsa:6601"/>
<dbReference type="UCSC" id="uc001ska.4">
    <molecule id="Q8TAQ2-1"/>
    <property type="organism name" value="human"/>
</dbReference>
<dbReference type="AGR" id="HGNC:11105"/>
<dbReference type="CTD" id="6601"/>
<dbReference type="DisGeNET" id="6601"/>
<dbReference type="GeneCards" id="SMARCC2"/>
<dbReference type="GeneReviews" id="SMARCC2"/>
<dbReference type="HGNC" id="HGNC:11105">
    <property type="gene designation" value="SMARCC2"/>
</dbReference>
<dbReference type="HPA" id="ENSG00000139613">
    <property type="expression patterns" value="Low tissue specificity"/>
</dbReference>
<dbReference type="MalaCards" id="SMARCC2"/>
<dbReference type="MIM" id="601734">
    <property type="type" value="gene"/>
</dbReference>
<dbReference type="MIM" id="618362">
    <property type="type" value="phenotype"/>
</dbReference>
<dbReference type="neXtProt" id="NX_Q8TAQ2"/>
<dbReference type="OpenTargets" id="ENSG00000139613"/>
<dbReference type="Orphanet" id="1465">
    <property type="disease" value="Coffin-Siris syndrome"/>
</dbReference>
<dbReference type="PharmGKB" id="PA35955"/>
<dbReference type="VEuPathDB" id="HostDB:ENSG00000139613"/>
<dbReference type="eggNOG" id="KOG1279">
    <property type="taxonomic scope" value="Eukaryota"/>
</dbReference>
<dbReference type="GeneTree" id="ENSGT00940000155746"/>
<dbReference type="HOGENOM" id="CLU_004447_0_1_1"/>
<dbReference type="InParanoid" id="Q8TAQ2"/>
<dbReference type="OrthoDB" id="118550at2759"/>
<dbReference type="PAN-GO" id="Q8TAQ2">
    <property type="GO annotations" value="5 GO annotations based on evolutionary models"/>
</dbReference>
<dbReference type="PhylomeDB" id="Q8TAQ2"/>
<dbReference type="TreeFam" id="TF314710"/>
<dbReference type="PathwayCommons" id="Q8TAQ2"/>
<dbReference type="Reactome" id="R-HSA-3214858">
    <property type="pathway name" value="RMTs methylate histone arginines"/>
</dbReference>
<dbReference type="Reactome" id="R-HSA-8939243">
    <property type="pathway name" value="RUNX1 interacts with co-factors whose precise effect on RUNX1 targets is not known"/>
</dbReference>
<dbReference type="Reactome" id="R-HSA-9824585">
    <property type="pathway name" value="Regulation of MITF-M-dependent genes involved in pigmentation"/>
</dbReference>
<dbReference type="Reactome" id="R-HSA-9845323">
    <property type="pathway name" value="Regulation of endogenous retroelements by Piwi-interacting RNAs (piRNAs)"/>
</dbReference>
<dbReference type="SignaLink" id="Q8TAQ2"/>
<dbReference type="SIGNOR" id="Q8TAQ2"/>
<dbReference type="BioGRID-ORCS" id="6601">
    <property type="hits" value="41 hits in 1163 CRISPR screens"/>
</dbReference>
<dbReference type="ChiTaRS" id="SMARCC2">
    <property type="organism name" value="human"/>
</dbReference>
<dbReference type="GeneWiki" id="SMARCC2"/>
<dbReference type="GenomeRNAi" id="6601"/>
<dbReference type="Pharos" id="Q8TAQ2">
    <property type="development level" value="Tbio"/>
</dbReference>
<dbReference type="PRO" id="PR:Q8TAQ2"/>
<dbReference type="Proteomes" id="UP000005640">
    <property type="component" value="Chromosome 12"/>
</dbReference>
<dbReference type="RNAct" id="Q8TAQ2">
    <property type="molecule type" value="protein"/>
</dbReference>
<dbReference type="Bgee" id="ENSG00000139613">
    <property type="expression patterns" value="Expressed in ventricular zone and 211 other cell types or tissues"/>
</dbReference>
<dbReference type="ExpressionAtlas" id="Q8TAQ2">
    <property type="expression patterns" value="baseline and differential"/>
</dbReference>
<dbReference type="GO" id="GO:0140092">
    <property type="term" value="C:bBAF complex"/>
    <property type="evidence" value="ECO:0000303"/>
    <property type="project" value="ComplexPortal"/>
</dbReference>
<dbReference type="GO" id="GO:0035060">
    <property type="term" value="C:brahma complex"/>
    <property type="evidence" value="ECO:0000303"/>
    <property type="project" value="ComplexPortal"/>
</dbReference>
<dbReference type="GO" id="GO:0000785">
    <property type="term" value="C:chromatin"/>
    <property type="evidence" value="ECO:0007005"/>
    <property type="project" value="UniProtKB"/>
</dbReference>
<dbReference type="GO" id="GO:0000776">
    <property type="term" value="C:kinetochore"/>
    <property type="evidence" value="ECO:0000303"/>
    <property type="project" value="ComplexPortal"/>
</dbReference>
<dbReference type="GO" id="GO:0071565">
    <property type="term" value="C:nBAF complex"/>
    <property type="evidence" value="ECO:0000250"/>
    <property type="project" value="UniProtKB"/>
</dbReference>
<dbReference type="GO" id="GO:0071564">
    <property type="term" value="C:npBAF complex"/>
    <property type="evidence" value="ECO:0000250"/>
    <property type="project" value="UniProtKB"/>
</dbReference>
<dbReference type="GO" id="GO:0016363">
    <property type="term" value="C:nuclear matrix"/>
    <property type="evidence" value="ECO:0000303"/>
    <property type="project" value="ComplexPortal"/>
</dbReference>
<dbReference type="GO" id="GO:0005654">
    <property type="term" value="C:nucleoplasm"/>
    <property type="evidence" value="ECO:0000314"/>
    <property type="project" value="HPA"/>
</dbReference>
<dbReference type="GO" id="GO:0032991">
    <property type="term" value="C:protein-containing complex"/>
    <property type="evidence" value="ECO:0007005"/>
    <property type="project" value="UniProtKB"/>
</dbReference>
<dbReference type="GO" id="GO:0016586">
    <property type="term" value="C:RSC-type complex"/>
    <property type="evidence" value="ECO:0000303"/>
    <property type="project" value="ComplexPortal"/>
</dbReference>
<dbReference type="GO" id="GO:0016514">
    <property type="term" value="C:SWI/SNF complex"/>
    <property type="evidence" value="ECO:0000314"/>
    <property type="project" value="UniProtKB"/>
</dbReference>
<dbReference type="GO" id="GO:0042393">
    <property type="term" value="F:histone binding"/>
    <property type="evidence" value="ECO:0000318"/>
    <property type="project" value="GO_Central"/>
</dbReference>
<dbReference type="GO" id="GO:0003713">
    <property type="term" value="F:transcription coactivator activity"/>
    <property type="evidence" value="ECO:0000303"/>
    <property type="project" value="BHF-UCL"/>
</dbReference>
<dbReference type="GO" id="GO:0006338">
    <property type="term" value="P:chromatin remodeling"/>
    <property type="evidence" value="ECO:0000314"/>
    <property type="project" value="UniProtKB"/>
</dbReference>
<dbReference type="GO" id="GO:0045892">
    <property type="term" value="P:negative regulation of DNA-templated transcription"/>
    <property type="evidence" value="ECO:0000314"/>
    <property type="project" value="UniProtKB"/>
</dbReference>
<dbReference type="GO" id="GO:0007399">
    <property type="term" value="P:nervous system development"/>
    <property type="evidence" value="ECO:0007669"/>
    <property type="project" value="UniProtKB-KW"/>
</dbReference>
<dbReference type="GO" id="GO:0006337">
    <property type="term" value="P:nucleosome disassembly"/>
    <property type="evidence" value="ECO:0000314"/>
    <property type="project" value="BHF-UCL"/>
</dbReference>
<dbReference type="GO" id="GO:0045597">
    <property type="term" value="P:positive regulation of cell differentiation"/>
    <property type="evidence" value="ECO:0000303"/>
    <property type="project" value="ComplexPortal"/>
</dbReference>
<dbReference type="GO" id="GO:0045893">
    <property type="term" value="P:positive regulation of DNA-templated transcription"/>
    <property type="evidence" value="ECO:0000314"/>
    <property type="project" value="UniProtKB"/>
</dbReference>
<dbReference type="GO" id="GO:2000781">
    <property type="term" value="P:positive regulation of double-strand break repair"/>
    <property type="evidence" value="ECO:0000303"/>
    <property type="project" value="ComplexPortal"/>
</dbReference>
<dbReference type="GO" id="GO:0045663">
    <property type="term" value="P:positive regulation of myoblast differentiation"/>
    <property type="evidence" value="ECO:0000303"/>
    <property type="project" value="ComplexPortal"/>
</dbReference>
<dbReference type="GO" id="GO:0045582">
    <property type="term" value="P:positive regulation of T cell differentiation"/>
    <property type="evidence" value="ECO:0000303"/>
    <property type="project" value="ComplexPortal"/>
</dbReference>
<dbReference type="GO" id="GO:0070316">
    <property type="term" value="P:regulation of G0 to G1 transition"/>
    <property type="evidence" value="ECO:0000303"/>
    <property type="project" value="ComplexPortal"/>
</dbReference>
<dbReference type="GO" id="GO:2000045">
    <property type="term" value="P:regulation of G1/S transition of mitotic cell cycle"/>
    <property type="evidence" value="ECO:0000303"/>
    <property type="project" value="ComplexPortal"/>
</dbReference>
<dbReference type="GO" id="GO:0030071">
    <property type="term" value="P:regulation of mitotic metaphase/anaphase transition"/>
    <property type="evidence" value="ECO:0000303"/>
    <property type="project" value="ComplexPortal"/>
</dbReference>
<dbReference type="GO" id="GO:2000819">
    <property type="term" value="P:regulation of nucleotide-excision repair"/>
    <property type="evidence" value="ECO:0000303"/>
    <property type="project" value="ComplexPortal"/>
</dbReference>
<dbReference type="GO" id="GO:0006357">
    <property type="term" value="P:regulation of transcription by RNA polymerase II"/>
    <property type="evidence" value="ECO:0000303"/>
    <property type="project" value="BHF-UCL"/>
</dbReference>
<dbReference type="FunFam" id="1.10.10.60:FF:000014">
    <property type="entry name" value="SWI/SNF complex subunit SMARCC2 isoform C"/>
    <property type="match status" value="1"/>
</dbReference>
<dbReference type="FunFam" id="1.10.10.10:FF:000020">
    <property type="entry name" value="SWI/SNF complex subunit SMARCC2 isoform c"/>
    <property type="match status" value="1"/>
</dbReference>
<dbReference type="Gene3D" id="1.10.10.60">
    <property type="entry name" value="Homeodomain-like"/>
    <property type="match status" value="1"/>
</dbReference>
<dbReference type="Gene3D" id="1.10.10.10">
    <property type="entry name" value="Winged helix-like DNA-binding domain superfamily/Winged helix DNA-binding domain"/>
    <property type="match status" value="1"/>
</dbReference>
<dbReference type="InterPro" id="IPR036420">
    <property type="entry name" value="BRCT_dom_sf"/>
</dbReference>
<dbReference type="InterPro" id="IPR000953">
    <property type="entry name" value="Chromo/chromo_shadow_dom"/>
</dbReference>
<dbReference type="InterPro" id="IPR009057">
    <property type="entry name" value="Homeodomain-like_sf"/>
</dbReference>
<dbReference type="InterPro" id="IPR049898">
    <property type="entry name" value="MARR_BRCT_CHROMO"/>
</dbReference>
<dbReference type="InterPro" id="IPR001005">
    <property type="entry name" value="SANT/Myb"/>
</dbReference>
<dbReference type="InterPro" id="IPR017884">
    <property type="entry name" value="SANT_dom"/>
</dbReference>
<dbReference type="InterPro" id="IPR032451">
    <property type="entry name" value="SMARCC_C"/>
</dbReference>
<dbReference type="InterPro" id="IPR032450">
    <property type="entry name" value="SMARCC_N"/>
</dbReference>
<dbReference type="InterPro" id="IPR007526">
    <property type="entry name" value="SWIRM"/>
</dbReference>
<dbReference type="InterPro" id="IPR032448">
    <property type="entry name" value="SWIRM-assoc"/>
</dbReference>
<dbReference type="InterPro" id="IPR036388">
    <property type="entry name" value="WH-like_DNA-bd_sf"/>
</dbReference>
<dbReference type="PANTHER" id="PTHR15381:SF1">
    <property type="entry name" value="CHONDROITIN SULFATE PROTEOGLYCAN 5"/>
    <property type="match status" value="1"/>
</dbReference>
<dbReference type="PANTHER" id="PTHR15381">
    <property type="entry name" value="CHONDROITIN SULFATE PROTEOGLYCAN 5 -RELATED"/>
    <property type="match status" value="1"/>
</dbReference>
<dbReference type="Pfam" id="PF00249">
    <property type="entry name" value="Myb_DNA-binding"/>
    <property type="match status" value="1"/>
</dbReference>
<dbReference type="Pfam" id="PF04433">
    <property type="entry name" value="SWIRM"/>
    <property type="match status" value="1"/>
</dbReference>
<dbReference type="Pfam" id="PF16495">
    <property type="entry name" value="SWIRM-assoc_1"/>
    <property type="match status" value="1"/>
</dbReference>
<dbReference type="Pfam" id="PF16496">
    <property type="entry name" value="SWIRM-assoc_2"/>
    <property type="match status" value="1"/>
</dbReference>
<dbReference type="Pfam" id="PF16498">
    <property type="entry name" value="SWIRM-assoc_3"/>
    <property type="match status" value="1"/>
</dbReference>
<dbReference type="SMART" id="SM00298">
    <property type="entry name" value="CHROMO"/>
    <property type="match status" value="1"/>
</dbReference>
<dbReference type="SMART" id="SM00717">
    <property type="entry name" value="SANT"/>
    <property type="match status" value="1"/>
</dbReference>
<dbReference type="SUPFAM" id="SSF52113">
    <property type="entry name" value="BRCT domain"/>
    <property type="match status" value="1"/>
</dbReference>
<dbReference type="SUPFAM" id="SSF46689">
    <property type="entry name" value="Homeodomain-like"/>
    <property type="match status" value="2"/>
</dbReference>
<dbReference type="PROSITE" id="PS52032">
    <property type="entry name" value="MARR_BRCT_CHROMO"/>
    <property type="match status" value="1"/>
</dbReference>
<dbReference type="PROSITE" id="PS51293">
    <property type="entry name" value="SANT"/>
    <property type="match status" value="1"/>
</dbReference>
<dbReference type="PROSITE" id="PS50934">
    <property type="entry name" value="SWIRM"/>
    <property type="match status" value="1"/>
</dbReference>